<reference key="1">
    <citation type="journal article" date="2000" name="Nature">
        <title>Sequence and analysis of chromosome 5 of the plant Arabidopsis thaliana.</title>
        <authorList>
            <person name="Tabata S."/>
            <person name="Kaneko T."/>
            <person name="Nakamura Y."/>
            <person name="Kotani H."/>
            <person name="Kato T."/>
            <person name="Asamizu E."/>
            <person name="Miyajima N."/>
            <person name="Sasamoto S."/>
            <person name="Kimura T."/>
            <person name="Hosouchi T."/>
            <person name="Kawashima K."/>
            <person name="Kohara M."/>
            <person name="Matsumoto M."/>
            <person name="Matsuno A."/>
            <person name="Muraki A."/>
            <person name="Nakayama S."/>
            <person name="Nakazaki N."/>
            <person name="Naruo K."/>
            <person name="Okumura S."/>
            <person name="Shinpo S."/>
            <person name="Takeuchi C."/>
            <person name="Wada T."/>
            <person name="Watanabe A."/>
            <person name="Yamada M."/>
            <person name="Yasuda M."/>
            <person name="Sato S."/>
            <person name="de la Bastide M."/>
            <person name="Huang E."/>
            <person name="Spiegel L."/>
            <person name="Gnoj L."/>
            <person name="O'Shaughnessy A."/>
            <person name="Preston R."/>
            <person name="Habermann K."/>
            <person name="Murray J."/>
            <person name="Johnson D."/>
            <person name="Rohlfing T."/>
            <person name="Nelson J."/>
            <person name="Stoneking T."/>
            <person name="Pepin K."/>
            <person name="Spieth J."/>
            <person name="Sekhon M."/>
            <person name="Armstrong J."/>
            <person name="Becker M."/>
            <person name="Belter E."/>
            <person name="Cordum H."/>
            <person name="Cordes M."/>
            <person name="Courtney L."/>
            <person name="Courtney W."/>
            <person name="Dante M."/>
            <person name="Du H."/>
            <person name="Edwards J."/>
            <person name="Fryman J."/>
            <person name="Haakensen B."/>
            <person name="Lamar E."/>
            <person name="Latreille P."/>
            <person name="Leonard S."/>
            <person name="Meyer R."/>
            <person name="Mulvaney E."/>
            <person name="Ozersky P."/>
            <person name="Riley A."/>
            <person name="Strowmatt C."/>
            <person name="Wagner-McPherson C."/>
            <person name="Wollam A."/>
            <person name="Yoakum M."/>
            <person name="Bell M."/>
            <person name="Dedhia N."/>
            <person name="Parnell L."/>
            <person name="Shah R."/>
            <person name="Rodriguez M."/>
            <person name="Hoon See L."/>
            <person name="Vil D."/>
            <person name="Baker J."/>
            <person name="Kirchoff K."/>
            <person name="Toth K."/>
            <person name="King L."/>
            <person name="Bahret A."/>
            <person name="Miller B."/>
            <person name="Marra M.A."/>
            <person name="Martienssen R."/>
            <person name="McCombie W.R."/>
            <person name="Wilson R.K."/>
            <person name="Murphy G."/>
            <person name="Bancroft I."/>
            <person name="Volckaert G."/>
            <person name="Wambutt R."/>
            <person name="Duesterhoeft A."/>
            <person name="Stiekema W."/>
            <person name="Pohl T."/>
            <person name="Entian K.-D."/>
            <person name="Terryn N."/>
            <person name="Hartley N."/>
            <person name="Bent E."/>
            <person name="Johnson S."/>
            <person name="Langham S.-A."/>
            <person name="McCullagh B."/>
            <person name="Robben J."/>
            <person name="Grymonprez B."/>
            <person name="Zimmermann W."/>
            <person name="Ramsperger U."/>
            <person name="Wedler H."/>
            <person name="Balke K."/>
            <person name="Wedler E."/>
            <person name="Peters S."/>
            <person name="van Staveren M."/>
            <person name="Dirkse W."/>
            <person name="Mooijman P."/>
            <person name="Klein Lankhorst R."/>
            <person name="Weitzenegger T."/>
            <person name="Bothe G."/>
            <person name="Rose M."/>
            <person name="Hauf J."/>
            <person name="Berneiser S."/>
            <person name="Hempel S."/>
            <person name="Feldpausch M."/>
            <person name="Lamberth S."/>
            <person name="Villarroel R."/>
            <person name="Gielen J."/>
            <person name="Ardiles W."/>
            <person name="Bents O."/>
            <person name="Lemcke K."/>
            <person name="Kolesov G."/>
            <person name="Mayer K.F.X."/>
            <person name="Rudd S."/>
            <person name="Schoof H."/>
            <person name="Schueller C."/>
            <person name="Zaccaria P."/>
            <person name="Mewes H.-W."/>
            <person name="Bevan M."/>
            <person name="Fransz P.F."/>
        </authorList>
    </citation>
    <scope>NUCLEOTIDE SEQUENCE [LARGE SCALE GENOMIC DNA]</scope>
    <source>
        <strain>cv. Columbia</strain>
    </source>
</reference>
<reference key="2">
    <citation type="journal article" date="2017" name="Plant J.">
        <title>Araport11: a complete reannotation of the Arabidopsis thaliana reference genome.</title>
        <authorList>
            <person name="Cheng C.Y."/>
            <person name="Krishnakumar V."/>
            <person name="Chan A.P."/>
            <person name="Thibaud-Nissen F."/>
            <person name="Schobel S."/>
            <person name="Town C.D."/>
        </authorList>
    </citation>
    <scope>GENOME REANNOTATION</scope>
    <source>
        <strain>cv. Columbia</strain>
    </source>
</reference>
<reference key="3">
    <citation type="journal article" date="2003" name="Plant Mol. Biol.">
        <title>Characterization of a pathogen-induced calmodulin-binding protein: mapping of four Ca2+-dependent calmodulin-binding domains.</title>
        <authorList>
            <person name="Reddy V.S."/>
            <person name="Ali G.S."/>
            <person name="Reddy A.S."/>
        </authorList>
    </citation>
    <scope>NUCLEOTIDE SEQUENCE [MRNA] OF 332-1488</scope>
    <scope>FUNCTION</scope>
    <scope>INDUCTION</scope>
</reference>
<evidence type="ECO:0000255" key="1"/>
<evidence type="ECO:0000256" key="2">
    <source>
        <dbReference type="SAM" id="MobiDB-lite"/>
    </source>
</evidence>
<evidence type="ECO:0000269" key="3">
    <source>
    </source>
</evidence>
<evidence type="ECO:0000303" key="4">
    <source>
    </source>
</evidence>
<evidence type="ECO:0000305" key="5"/>
<evidence type="ECO:0000312" key="6">
    <source>
        <dbReference type="Araport" id="AT5G04020"/>
    </source>
</evidence>
<evidence type="ECO:0000312" key="7">
    <source>
        <dbReference type="EMBL" id="CAB85522.1"/>
    </source>
</evidence>
<protein>
    <recommendedName>
        <fullName evidence="5">Calmodulin binding protein PICBP</fullName>
    </recommendedName>
    <alternativeName>
        <fullName evidence="4">Pathogen-induced CaM-binding protein</fullName>
    </alternativeName>
</protein>
<keyword id="KW-0112">Calmodulin-binding</keyword>
<keyword id="KW-0611">Plant defense</keyword>
<keyword id="KW-1185">Reference proteome</keyword>
<organism>
    <name type="scientific">Arabidopsis thaliana</name>
    <name type="common">Mouse-ear cress</name>
    <dbReference type="NCBI Taxonomy" id="3702"/>
    <lineage>
        <taxon>Eukaryota</taxon>
        <taxon>Viridiplantae</taxon>
        <taxon>Streptophyta</taxon>
        <taxon>Embryophyta</taxon>
        <taxon>Tracheophyta</taxon>
        <taxon>Spermatophyta</taxon>
        <taxon>Magnoliopsida</taxon>
        <taxon>eudicotyledons</taxon>
        <taxon>Gunneridae</taxon>
        <taxon>Pentapetalae</taxon>
        <taxon>rosids</taxon>
        <taxon>malvids</taxon>
        <taxon>Brassicales</taxon>
        <taxon>Brassicaceae</taxon>
        <taxon>Camelineae</taxon>
        <taxon>Arabidopsis</taxon>
    </lineage>
</organism>
<sequence length="1488" mass="168618">MSNPMFPEKWEESSTSKSSRRVHKRRERKMWKKPIKLSRFPSFGFSGSDFTLDQIPAIFSGYTAESEDSSSSEMSDDSRTYSKSSDENEELDQERPRSVKRRAKSKSISRISSMKVLRRQSTRTLYGAGQRLKKMRSMKRLTSNSRQILRKKNLDRGDFGLLQPHYLRPTSSSASKNVENNQKNLGAARLKRIASLRYNGLLKATCSSAMKGSSSKRSNDVCTYRYCSLHGRRHSHAADNNAGVPSLKRFVSMRRKFMNRQKSVNRRLVLLKRTLSRKRGPLGGRVVTDQESKEVDDNVDGDSDEEVFEEEVSSSVDGGNDNESIGRSSETVMVDVDDNVDRGMDAMETVASKVQESKTETVGATLWRAICEQTVTGHDHDDGKVDGTTSDGTVGDNEEVCREGSSGELREEDGKKTEYVWNETVTLVKQAFDEILAEITDDDSSDDISMTKDEALEVGLGEEDVGADSSDSSCSDMQPVIERDTHLSVIASTFHMRDEFGHQRGPKKWSYLKRVILLKRFLKSLDRKERRKLSDGKESETIMRLRRELVGERKNAEEWMLDHALRQVISTLAPSQKKKVKHLVKAFESLIPMDGGSRGHDDLVSPAREENETVNSQTQTILRDNKDATDILEVSPAKDLEETNLTCEASSFLSIDMKSDEENETVNSPTIWRDNEDTTDLLEVVPAKDLEETNLTSESSSSLCIGMKSDEALESTADASLCNHLAVEEEVDGLALGSFIEEEEKKGESEKQNLSTWRNLIQKHMVMRDNSEGNRNETEQEHKWSYGTDQMTGIDDANAAAVKSIQLAFETILSEIPDSSSDEESVSESSNSLKEEKEHQGETKRSWNSLRKVILLKRFVKSLEKVQVPNPRKMRNLPVESAFEAENVFLRHRSIMEGTRTEGEEMMLDYALRQAISRLAPIQRKKVDLLVQAFDIVLDGHDTPKQTKNSDTPRNNDETKEGKPRVEEGCEVNKDEQKIKNVFARFQVHQKDLKGEEEVHNTPKESRNLPPIRNFKQRIVVEKGKDSRMWKLIYKHMVTEKEGIDSANAESVASVESEYDDEAGGLQIDARRSGTVTLVREALEKILSEIPDNSSDDQSMDSDITTEQELFERNSQVSEEKSEVSSATFKPKFTEKRVKGWNNVKKVILLKRFVSDLGSLTRLSPKTPRVLPWEPDPETEKIRLRHQEIGGKRNSEEWMLDYALRQAISTLAPSQKRKVSLLAQAFDTISLQDMGSGSTPGSAASSRNISRQSSISSMAAHYENEANAEIIRGKLRNLQEDLKESAKLDGVSKDLEEKQQCSSLWRILCKQMEDNEKNQTLPEETRKEEEEEELKEDTSVDGEKMELYQTEAVELLGEVIDGISLEESQDQNLNNEETRQKSETLQVSKVRIDRWSNLKRAILLRRFVKALENVRKFNPREPRFLPPNPEVEAEKVNLRHQETQNKKNGDEWMVDNALQGVVSKLTPARKLKVQLLVQAFESLSATGN</sequence>
<feature type="chain" id="PRO_0000442224" description="Calmodulin binding protein PICBP">
    <location>
        <begin position="1"/>
        <end position="1488"/>
    </location>
</feature>
<feature type="region of interest" description="Disordered" evidence="2">
    <location>
        <begin position="1"/>
        <end position="31"/>
    </location>
</feature>
<feature type="region of interest" description="Disordered" evidence="2">
    <location>
        <begin position="63"/>
        <end position="112"/>
    </location>
</feature>
<feature type="region of interest" description="Disordered" evidence="2">
    <location>
        <begin position="280"/>
        <end position="329"/>
    </location>
</feature>
<feature type="region of interest" description="Disordered" evidence="2">
    <location>
        <begin position="378"/>
        <end position="414"/>
    </location>
</feature>
<feature type="region of interest" description="Calmodulin-binding" evidence="1">
    <location>
        <begin position="493"/>
        <end position="592"/>
    </location>
</feature>
<feature type="region of interest" description="Disordered" evidence="2">
    <location>
        <begin position="816"/>
        <end position="844"/>
    </location>
</feature>
<feature type="region of interest" description="Calmodulin-binding" evidence="1">
    <location>
        <begin position="831"/>
        <end position="938"/>
    </location>
</feature>
<feature type="region of interest" description="Disordered" evidence="2">
    <location>
        <begin position="941"/>
        <end position="971"/>
    </location>
</feature>
<feature type="region of interest" description="Calmodulin-binding" evidence="1">
    <location>
        <begin position="1135"/>
        <end position="1229"/>
    </location>
</feature>
<feature type="region of interest" description="Disordered" evidence="2">
    <location>
        <begin position="1232"/>
        <end position="1252"/>
    </location>
</feature>
<feature type="region of interest" description="Disordered" evidence="2">
    <location>
        <begin position="1316"/>
        <end position="1340"/>
    </location>
</feature>
<feature type="region of interest" description="Calmodulin-binding" evidence="1">
    <location>
        <begin position="1379"/>
        <end position="1483"/>
    </location>
</feature>
<feature type="compositionally biased region" description="Basic residues" evidence="2">
    <location>
        <begin position="18"/>
        <end position="31"/>
    </location>
</feature>
<feature type="compositionally biased region" description="Basic and acidic residues" evidence="2">
    <location>
        <begin position="76"/>
        <end position="86"/>
    </location>
</feature>
<feature type="compositionally biased region" description="Basic residues" evidence="2">
    <location>
        <begin position="98"/>
        <end position="107"/>
    </location>
</feature>
<feature type="compositionally biased region" description="Acidic residues" evidence="2">
    <location>
        <begin position="297"/>
        <end position="312"/>
    </location>
</feature>
<feature type="compositionally biased region" description="Basic and acidic residues" evidence="2">
    <location>
        <begin position="833"/>
        <end position="844"/>
    </location>
</feature>
<feature type="compositionally biased region" description="Basic and acidic residues" evidence="2">
    <location>
        <begin position="954"/>
        <end position="971"/>
    </location>
</feature>
<feature type="compositionally biased region" description="Low complexity" evidence="2">
    <location>
        <begin position="1235"/>
        <end position="1252"/>
    </location>
</feature>
<feature type="compositionally biased region" description="Basic and acidic residues" evidence="2">
    <location>
        <begin position="1316"/>
        <end position="1328"/>
    </location>
</feature>
<proteinExistence type="evidence at transcript level"/>
<accession>A0A1P8BH59</accession>
<accession>Q8H6X1</accession>
<accession>Q9LZA8</accession>
<dbReference type="EMBL" id="AL162873">
    <property type="protein sequence ID" value="CAB85522.1"/>
    <property type="status" value="ALT_SEQ"/>
    <property type="molecule type" value="Genomic_DNA"/>
</dbReference>
<dbReference type="EMBL" id="CP002688">
    <property type="protein sequence ID" value="AED90685.2"/>
    <property type="molecule type" value="Genomic_DNA"/>
</dbReference>
<dbReference type="EMBL" id="CP002688">
    <property type="protein sequence ID" value="ANM70933.1"/>
    <property type="molecule type" value="Genomic_DNA"/>
</dbReference>
<dbReference type="EMBL" id="AF438330">
    <property type="protein sequence ID" value="AAN63625.1"/>
    <property type="molecule type" value="mRNA"/>
</dbReference>
<dbReference type="PIR" id="T48429">
    <property type="entry name" value="T48429"/>
</dbReference>
<dbReference type="RefSeq" id="NP_001318476.1">
    <property type="nucleotide sequence ID" value="NM_001342742.1"/>
</dbReference>
<dbReference type="RefSeq" id="NP_001332504.1">
    <property type="nucleotide sequence ID" value="NM_001342743.1"/>
</dbReference>
<dbReference type="SMR" id="A0A1P8BH59"/>
<dbReference type="FunCoup" id="A0A1P8BH59">
    <property type="interactions" value="13"/>
</dbReference>
<dbReference type="STRING" id="3702.A0A1P8BH59"/>
<dbReference type="GlyGen" id="A0A1P8BH59">
    <property type="glycosylation" value="1 site"/>
</dbReference>
<dbReference type="iPTMnet" id="A0A1P8BH59"/>
<dbReference type="PaxDb" id="3702-AT5G04020.1"/>
<dbReference type="ProteomicsDB" id="226175"/>
<dbReference type="EnsemblPlants" id="AT5G04020.1">
    <property type="protein sequence ID" value="AT5G04020.1"/>
    <property type="gene ID" value="AT5G04020"/>
</dbReference>
<dbReference type="EnsemblPlants" id="AT5G04020.2">
    <property type="protein sequence ID" value="AT5G04020.2"/>
    <property type="gene ID" value="AT5G04020"/>
</dbReference>
<dbReference type="GeneID" id="830281"/>
<dbReference type="Gramene" id="AT5G04020.1">
    <property type="protein sequence ID" value="AT5G04020.1"/>
    <property type="gene ID" value="AT5G04020"/>
</dbReference>
<dbReference type="Gramene" id="AT5G04020.2">
    <property type="protein sequence ID" value="AT5G04020.2"/>
    <property type="gene ID" value="AT5G04020"/>
</dbReference>
<dbReference type="KEGG" id="ath:AT5G04020"/>
<dbReference type="Araport" id="AT5G04020"/>
<dbReference type="TAIR" id="AT5G04020"/>
<dbReference type="eggNOG" id="ENOG502QV73">
    <property type="taxonomic scope" value="Eukaryota"/>
</dbReference>
<dbReference type="InParanoid" id="A0A1P8BH59"/>
<dbReference type="OMA" id="WMVDNAL"/>
<dbReference type="PRO" id="PR:A0A1P8BH59"/>
<dbReference type="Proteomes" id="UP000006548">
    <property type="component" value="Chromosome 5"/>
</dbReference>
<dbReference type="ExpressionAtlas" id="A0A1P8BH59">
    <property type="expression patterns" value="baseline and differential"/>
</dbReference>
<dbReference type="GO" id="GO:0005516">
    <property type="term" value="F:calmodulin binding"/>
    <property type="evidence" value="ECO:0007669"/>
    <property type="project" value="UniProtKB-KW"/>
</dbReference>
<dbReference type="GO" id="GO:0006952">
    <property type="term" value="P:defense response"/>
    <property type="evidence" value="ECO:0007669"/>
    <property type="project" value="UniProtKB-KW"/>
</dbReference>
<dbReference type="InterPro" id="IPR012417">
    <property type="entry name" value="CaM-bd_dom_pln"/>
</dbReference>
<dbReference type="InterPro" id="IPR044681">
    <property type="entry name" value="PICBP-like"/>
</dbReference>
<dbReference type="PANTHER" id="PTHR33923:SF3">
    <property type="entry name" value="CALMODULIN BINDING PROTEIN PICBP"/>
    <property type="match status" value="1"/>
</dbReference>
<dbReference type="PANTHER" id="PTHR33923">
    <property type="entry name" value="CALMODULIN-BINDING PROTEIN-RELATED"/>
    <property type="match status" value="1"/>
</dbReference>
<dbReference type="Pfam" id="PF07839">
    <property type="entry name" value="CaM_binding"/>
    <property type="match status" value="4"/>
</dbReference>
<dbReference type="SMART" id="SM01054">
    <property type="entry name" value="CaM_binding"/>
    <property type="match status" value="4"/>
</dbReference>
<name>PICBP_ARATH</name>
<comment type="function">
    <text evidence="3">Binds calmodulin in a calcium-dependent manner in vitro. May play a role in general plant defense including R gene-mediated responses.</text>
</comment>
<comment type="induction">
    <text evidence="3">Induced by infection with the bacterial pathogen Pseudomonas syringae pv tomato strain DC3000 carrying the avirulent factor avrRpm1.</text>
</comment>
<comment type="sequence caution" evidence="5">
    <conflict type="erroneous gene model prediction">
        <sequence resource="EMBL-CDS" id="CAB85522"/>
    </conflict>
</comment>
<gene>
    <name evidence="4" type="primary">PICBP</name>
    <name evidence="6" type="ordered locus">At5g04020</name>
    <name evidence="7" type="ORF">F8F6_230</name>
</gene>